<sequence>MKDTVSQPAGGRGATAPRPADAASPSCGSSPSADSLSVVLAGGGTAGHVEPAMAVADALVALDPRVRITALGTPRGLETRLVPQRGYHLELITAVPMPRKPGGDLARLPSRVWRAVREARDVLDDVDADVVVGFGGYVALPAYLAARGLPLPPRRRRRIPVVIHEANARAGLANRVGAHTADRVLSAVPDSGLRRAEVVGVPVRASIAALDRAVLRAEARAHFGFPDDARVLLVFGGSQGAVSLNRAVSGAAADLAAAGVCVLHAHGPQNVLELRRRAQGDPPYVAVPYLDRMELAYAAADLVICRAGAMTVAEVSAVGLPAIYVPLPIGNGEQRLNALPVVNAGGGMVVADAALTPELVARQVAGLLTDPARLAAMTAAAARVGHRDAAGQVARAALAVATGAGARTTT</sequence>
<keyword id="KW-0131">Cell cycle</keyword>
<keyword id="KW-0132">Cell division</keyword>
<keyword id="KW-1003">Cell membrane</keyword>
<keyword id="KW-0133">Cell shape</keyword>
<keyword id="KW-0961">Cell wall biogenesis/degradation</keyword>
<keyword id="KW-0328">Glycosyltransferase</keyword>
<keyword id="KW-0472">Membrane</keyword>
<keyword id="KW-0573">Peptidoglycan synthesis</keyword>
<keyword id="KW-0808">Transferase</keyword>
<proteinExistence type="inferred from homology"/>
<accession>A1KKJ6</accession>
<name>MURG_MYCBP</name>
<feature type="chain" id="PRO_1000002670" description="UDP-N-acetylglucosamine--N-acetylmuramyl-(pentapeptide) pyrophosphoryl-undecaprenol N-acetylglucosamine transferase">
    <location>
        <begin position="1"/>
        <end position="410"/>
    </location>
</feature>
<feature type="region of interest" description="Disordered" evidence="2">
    <location>
        <begin position="1"/>
        <end position="34"/>
    </location>
</feature>
<feature type="compositionally biased region" description="Low complexity" evidence="2">
    <location>
        <begin position="14"/>
        <end position="34"/>
    </location>
</feature>
<feature type="binding site" evidence="1">
    <location>
        <begin position="45"/>
        <end position="47"/>
    </location>
    <ligand>
        <name>UDP-N-acetyl-alpha-D-glucosamine</name>
        <dbReference type="ChEBI" id="CHEBI:57705"/>
    </ligand>
</feature>
<feature type="binding site" evidence="1">
    <location>
        <position position="167"/>
    </location>
    <ligand>
        <name>UDP-N-acetyl-alpha-D-glucosamine</name>
        <dbReference type="ChEBI" id="CHEBI:57705"/>
    </ligand>
</feature>
<feature type="binding site" evidence="1">
    <location>
        <position position="204"/>
    </location>
    <ligand>
        <name>UDP-N-acetyl-alpha-D-glucosamine</name>
        <dbReference type="ChEBI" id="CHEBI:57705"/>
    </ligand>
</feature>
<feature type="binding site" evidence="1">
    <location>
        <position position="238"/>
    </location>
    <ligand>
        <name>UDP-N-acetyl-alpha-D-glucosamine</name>
        <dbReference type="ChEBI" id="CHEBI:57705"/>
    </ligand>
</feature>
<feature type="binding site" evidence="1">
    <location>
        <position position="334"/>
    </location>
    <ligand>
        <name>UDP-N-acetyl-alpha-D-glucosamine</name>
        <dbReference type="ChEBI" id="CHEBI:57705"/>
    </ligand>
</feature>
<protein>
    <recommendedName>
        <fullName evidence="1">UDP-N-acetylglucosamine--N-acetylmuramyl-(pentapeptide) pyrophosphoryl-undecaprenol N-acetylglucosamine transferase</fullName>
        <ecNumber evidence="1">2.4.1.227</ecNumber>
    </recommendedName>
    <alternativeName>
        <fullName evidence="1">Undecaprenyl-PP-MurNAc-pentapeptide-UDPGlcNAc GlcNAc transferase</fullName>
    </alternativeName>
</protein>
<comment type="function">
    <text evidence="1">Cell wall formation. Catalyzes the transfer of a GlcNAc subunit on undecaprenyl-pyrophosphoryl-MurNAc-pentapeptide (lipid intermediate I) to form undecaprenyl-pyrophosphoryl-MurNAc-(pentapeptide)GlcNAc (lipid intermediate II).</text>
</comment>
<comment type="catalytic activity">
    <reaction evidence="1">
        <text>di-trans,octa-cis-undecaprenyl diphospho-N-acetyl-alpha-D-muramoyl-L-alanyl-D-glutamyl-meso-2,6-diaminopimeloyl-D-alanyl-D-alanine + UDP-N-acetyl-alpha-D-glucosamine = di-trans,octa-cis-undecaprenyl diphospho-[N-acetyl-alpha-D-glucosaminyl-(1-&gt;4)]-N-acetyl-alpha-D-muramoyl-L-alanyl-D-glutamyl-meso-2,6-diaminopimeloyl-D-alanyl-D-alanine + UDP + H(+)</text>
        <dbReference type="Rhea" id="RHEA:31227"/>
        <dbReference type="ChEBI" id="CHEBI:15378"/>
        <dbReference type="ChEBI" id="CHEBI:57705"/>
        <dbReference type="ChEBI" id="CHEBI:58223"/>
        <dbReference type="ChEBI" id="CHEBI:61387"/>
        <dbReference type="ChEBI" id="CHEBI:61388"/>
        <dbReference type="EC" id="2.4.1.227"/>
    </reaction>
</comment>
<comment type="pathway">
    <text evidence="1">Cell wall biogenesis; peptidoglycan biosynthesis.</text>
</comment>
<comment type="subcellular location">
    <subcellularLocation>
        <location evidence="1">Cell membrane</location>
        <topology evidence="1">Peripheral membrane protein</topology>
        <orientation evidence="1">Cytoplasmic side</orientation>
    </subcellularLocation>
</comment>
<comment type="similarity">
    <text evidence="1">Belongs to the glycosyltransferase 28 family. MurG subfamily.</text>
</comment>
<organism>
    <name type="scientific">Mycobacterium bovis (strain BCG / Pasteur 1173P2)</name>
    <dbReference type="NCBI Taxonomy" id="410289"/>
    <lineage>
        <taxon>Bacteria</taxon>
        <taxon>Bacillati</taxon>
        <taxon>Actinomycetota</taxon>
        <taxon>Actinomycetes</taxon>
        <taxon>Mycobacteriales</taxon>
        <taxon>Mycobacteriaceae</taxon>
        <taxon>Mycobacterium</taxon>
        <taxon>Mycobacterium tuberculosis complex</taxon>
    </lineage>
</organism>
<gene>
    <name evidence="1" type="primary">murG</name>
    <name type="ordered locus">BCG_2170c</name>
</gene>
<reference key="1">
    <citation type="journal article" date="2007" name="Proc. Natl. Acad. Sci. U.S.A.">
        <title>Genome plasticity of BCG and impact on vaccine efficacy.</title>
        <authorList>
            <person name="Brosch R."/>
            <person name="Gordon S.V."/>
            <person name="Garnier T."/>
            <person name="Eiglmeier K."/>
            <person name="Frigui W."/>
            <person name="Valenti P."/>
            <person name="Dos Santos S."/>
            <person name="Duthoy S."/>
            <person name="Lacroix C."/>
            <person name="Garcia-Pelayo C."/>
            <person name="Inwald J.K."/>
            <person name="Golby P."/>
            <person name="Garcia J.N."/>
            <person name="Hewinson R.G."/>
            <person name="Behr M.A."/>
            <person name="Quail M.A."/>
            <person name="Churcher C."/>
            <person name="Barrell B.G."/>
            <person name="Parkhill J."/>
            <person name="Cole S.T."/>
        </authorList>
    </citation>
    <scope>NUCLEOTIDE SEQUENCE [LARGE SCALE GENOMIC DNA]</scope>
    <source>
        <strain>BCG / Pasteur 1173P2</strain>
    </source>
</reference>
<dbReference type="EC" id="2.4.1.227" evidence="1"/>
<dbReference type="EMBL" id="AM408590">
    <property type="protein sequence ID" value="CAL72158.1"/>
    <property type="molecule type" value="Genomic_DNA"/>
</dbReference>
<dbReference type="RefSeq" id="WP_010950665.1">
    <property type="nucleotide sequence ID" value="NC_008769.1"/>
</dbReference>
<dbReference type="SMR" id="A1KKJ6"/>
<dbReference type="CAZy" id="GT28">
    <property type="family name" value="Glycosyltransferase Family 28"/>
</dbReference>
<dbReference type="KEGG" id="mbb:BCG_2170c"/>
<dbReference type="HOGENOM" id="CLU_037404_1_0_11"/>
<dbReference type="UniPathway" id="UPA00219"/>
<dbReference type="Proteomes" id="UP000001472">
    <property type="component" value="Chromosome"/>
</dbReference>
<dbReference type="GO" id="GO:0005886">
    <property type="term" value="C:plasma membrane"/>
    <property type="evidence" value="ECO:0007669"/>
    <property type="project" value="UniProtKB-SubCell"/>
</dbReference>
<dbReference type="GO" id="GO:0051991">
    <property type="term" value="F:UDP-N-acetyl-D-glucosamine:N-acetylmuramoyl-L-alanyl-D-glutamyl-meso-2,6-diaminopimelyl-D-alanyl-D-alanine-diphosphoundecaprenol 4-beta-N-acetylglucosaminlytransferase activity"/>
    <property type="evidence" value="ECO:0007669"/>
    <property type="project" value="RHEA"/>
</dbReference>
<dbReference type="GO" id="GO:0050511">
    <property type="term" value="F:undecaprenyldiphospho-muramoylpentapeptide beta-N-acetylglucosaminyltransferase activity"/>
    <property type="evidence" value="ECO:0007669"/>
    <property type="project" value="UniProtKB-UniRule"/>
</dbReference>
<dbReference type="GO" id="GO:0005975">
    <property type="term" value="P:carbohydrate metabolic process"/>
    <property type="evidence" value="ECO:0007669"/>
    <property type="project" value="InterPro"/>
</dbReference>
<dbReference type="GO" id="GO:0051301">
    <property type="term" value="P:cell division"/>
    <property type="evidence" value="ECO:0007669"/>
    <property type="project" value="UniProtKB-KW"/>
</dbReference>
<dbReference type="GO" id="GO:0071555">
    <property type="term" value="P:cell wall organization"/>
    <property type="evidence" value="ECO:0007669"/>
    <property type="project" value="UniProtKB-KW"/>
</dbReference>
<dbReference type="GO" id="GO:0030259">
    <property type="term" value="P:lipid glycosylation"/>
    <property type="evidence" value="ECO:0007669"/>
    <property type="project" value="UniProtKB-UniRule"/>
</dbReference>
<dbReference type="GO" id="GO:0009252">
    <property type="term" value="P:peptidoglycan biosynthetic process"/>
    <property type="evidence" value="ECO:0007669"/>
    <property type="project" value="UniProtKB-UniRule"/>
</dbReference>
<dbReference type="GO" id="GO:0008360">
    <property type="term" value="P:regulation of cell shape"/>
    <property type="evidence" value="ECO:0007669"/>
    <property type="project" value="UniProtKB-KW"/>
</dbReference>
<dbReference type="CDD" id="cd03785">
    <property type="entry name" value="GT28_MurG"/>
    <property type="match status" value="1"/>
</dbReference>
<dbReference type="Gene3D" id="3.40.50.2000">
    <property type="entry name" value="Glycogen Phosphorylase B"/>
    <property type="match status" value="2"/>
</dbReference>
<dbReference type="HAMAP" id="MF_00033">
    <property type="entry name" value="MurG"/>
    <property type="match status" value="1"/>
</dbReference>
<dbReference type="InterPro" id="IPR006009">
    <property type="entry name" value="GlcNAc_MurG"/>
</dbReference>
<dbReference type="InterPro" id="IPR007235">
    <property type="entry name" value="Glyco_trans_28_C"/>
</dbReference>
<dbReference type="InterPro" id="IPR004276">
    <property type="entry name" value="GlycoTrans_28_N"/>
</dbReference>
<dbReference type="NCBIfam" id="TIGR01133">
    <property type="entry name" value="murG"/>
    <property type="match status" value="1"/>
</dbReference>
<dbReference type="PANTHER" id="PTHR21015:SF22">
    <property type="entry name" value="GLYCOSYLTRANSFERASE"/>
    <property type="match status" value="1"/>
</dbReference>
<dbReference type="PANTHER" id="PTHR21015">
    <property type="entry name" value="UDP-N-ACETYLGLUCOSAMINE--N-ACETYLMURAMYL-(PENTAPEPTIDE) PYROPHOSPHORYL-UNDECAPRENOL N-ACETYLGLUCOSAMINE TRANSFERASE 1"/>
    <property type="match status" value="1"/>
</dbReference>
<dbReference type="Pfam" id="PF04101">
    <property type="entry name" value="Glyco_tran_28_C"/>
    <property type="match status" value="1"/>
</dbReference>
<dbReference type="Pfam" id="PF03033">
    <property type="entry name" value="Glyco_transf_28"/>
    <property type="match status" value="1"/>
</dbReference>
<dbReference type="SUPFAM" id="SSF53756">
    <property type="entry name" value="UDP-Glycosyltransferase/glycogen phosphorylase"/>
    <property type="match status" value="1"/>
</dbReference>
<evidence type="ECO:0000255" key="1">
    <source>
        <dbReference type="HAMAP-Rule" id="MF_00033"/>
    </source>
</evidence>
<evidence type="ECO:0000256" key="2">
    <source>
        <dbReference type="SAM" id="MobiDB-lite"/>
    </source>
</evidence>